<protein>
    <recommendedName>
        <fullName evidence="1">Dihydroxy-acid dehydratase</fullName>
        <shortName evidence="1">DAD</shortName>
        <ecNumber evidence="1">4.2.1.9</ecNumber>
    </recommendedName>
</protein>
<reference key="1">
    <citation type="journal article" date="2011" name="Proc. Natl. Acad. Sci. U.S.A.">
        <title>Genomic anatomy of Escherichia coli O157:H7 outbreaks.</title>
        <authorList>
            <person name="Eppinger M."/>
            <person name="Mammel M.K."/>
            <person name="Leclerc J.E."/>
            <person name="Ravel J."/>
            <person name="Cebula T.A."/>
        </authorList>
    </citation>
    <scope>NUCLEOTIDE SEQUENCE [LARGE SCALE GENOMIC DNA]</scope>
    <source>
        <strain>EC4115 / EHEC</strain>
    </source>
</reference>
<feature type="chain" id="PRO_1000089381" description="Dihydroxy-acid dehydratase">
    <location>
        <begin position="1"/>
        <end position="616"/>
    </location>
</feature>
<feature type="active site" description="Proton acceptor" evidence="1">
    <location>
        <position position="517"/>
    </location>
</feature>
<feature type="binding site" evidence="1">
    <location>
        <position position="81"/>
    </location>
    <ligand>
        <name>Mg(2+)</name>
        <dbReference type="ChEBI" id="CHEBI:18420"/>
    </ligand>
</feature>
<feature type="binding site" evidence="1">
    <location>
        <position position="122"/>
    </location>
    <ligand>
        <name>[2Fe-2S] cluster</name>
        <dbReference type="ChEBI" id="CHEBI:190135"/>
    </ligand>
</feature>
<feature type="binding site" evidence="1">
    <location>
        <position position="123"/>
    </location>
    <ligand>
        <name>Mg(2+)</name>
        <dbReference type="ChEBI" id="CHEBI:18420"/>
    </ligand>
</feature>
<feature type="binding site" description="via carbamate group" evidence="1">
    <location>
        <position position="124"/>
    </location>
    <ligand>
        <name>Mg(2+)</name>
        <dbReference type="ChEBI" id="CHEBI:18420"/>
    </ligand>
</feature>
<feature type="binding site" evidence="1">
    <location>
        <position position="195"/>
    </location>
    <ligand>
        <name>[2Fe-2S] cluster</name>
        <dbReference type="ChEBI" id="CHEBI:190135"/>
    </ligand>
</feature>
<feature type="binding site" evidence="1">
    <location>
        <position position="491"/>
    </location>
    <ligand>
        <name>Mg(2+)</name>
        <dbReference type="ChEBI" id="CHEBI:18420"/>
    </ligand>
</feature>
<feature type="modified residue" description="N6-carboxylysine" evidence="1">
    <location>
        <position position="124"/>
    </location>
</feature>
<keyword id="KW-0001">2Fe-2S</keyword>
<keyword id="KW-0028">Amino-acid biosynthesis</keyword>
<keyword id="KW-0100">Branched-chain amino acid biosynthesis</keyword>
<keyword id="KW-0408">Iron</keyword>
<keyword id="KW-0411">Iron-sulfur</keyword>
<keyword id="KW-0456">Lyase</keyword>
<keyword id="KW-0460">Magnesium</keyword>
<keyword id="KW-0479">Metal-binding</keyword>
<organism>
    <name type="scientific">Escherichia coli O157:H7 (strain EC4115 / EHEC)</name>
    <dbReference type="NCBI Taxonomy" id="444450"/>
    <lineage>
        <taxon>Bacteria</taxon>
        <taxon>Pseudomonadati</taxon>
        <taxon>Pseudomonadota</taxon>
        <taxon>Gammaproteobacteria</taxon>
        <taxon>Enterobacterales</taxon>
        <taxon>Enterobacteriaceae</taxon>
        <taxon>Escherichia</taxon>
    </lineage>
</organism>
<comment type="function">
    <text evidence="1">Functions in the biosynthesis of branched-chain amino acids. Catalyzes the dehydration of (2R,3R)-2,3-dihydroxy-3-methylpentanoate (2,3-dihydroxy-3-methylvalerate) into 2-oxo-3-methylpentanoate (2-oxo-3-methylvalerate) and of (2R)-2,3-dihydroxy-3-methylbutanoate (2,3-dihydroxyisovalerate) into 2-oxo-3-methylbutanoate (2-oxoisovalerate), the penultimate precursor to L-isoleucine and L-valine, respectively.</text>
</comment>
<comment type="catalytic activity">
    <reaction evidence="1">
        <text>(2R)-2,3-dihydroxy-3-methylbutanoate = 3-methyl-2-oxobutanoate + H2O</text>
        <dbReference type="Rhea" id="RHEA:24809"/>
        <dbReference type="ChEBI" id="CHEBI:11851"/>
        <dbReference type="ChEBI" id="CHEBI:15377"/>
        <dbReference type="ChEBI" id="CHEBI:49072"/>
        <dbReference type="EC" id="4.2.1.9"/>
    </reaction>
    <physiologicalReaction direction="left-to-right" evidence="1">
        <dbReference type="Rhea" id="RHEA:24810"/>
    </physiologicalReaction>
</comment>
<comment type="catalytic activity">
    <reaction evidence="1">
        <text>(2R,3R)-2,3-dihydroxy-3-methylpentanoate = (S)-3-methyl-2-oxopentanoate + H2O</text>
        <dbReference type="Rhea" id="RHEA:27694"/>
        <dbReference type="ChEBI" id="CHEBI:15377"/>
        <dbReference type="ChEBI" id="CHEBI:35146"/>
        <dbReference type="ChEBI" id="CHEBI:49258"/>
        <dbReference type="EC" id="4.2.1.9"/>
    </reaction>
    <physiologicalReaction direction="left-to-right" evidence="1">
        <dbReference type="Rhea" id="RHEA:27695"/>
    </physiologicalReaction>
</comment>
<comment type="cofactor">
    <cofactor evidence="1">
        <name>[2Fe-2S] cluster</name>
        <dbReference type="ChEBI" id="CHEBI:190135"/>
    </cofactor>
    <text evidence="1">Binds 1 [2Fe-2S] cluster per subunit. This cluster acts as a Lewis acid cofactor.</text>
</comment>
<comment type="cofactor">
    <cofactor evidence="1">
        <name>Mg(2+)</name>
        <dbReference type="ChEBI" id="CHEBI:18420"/>
    </cofactor>
</comment>
<comment type="pathway">
    <text evidence="1">Amino-acid biosynthesis; L-isoleucine biosynthesis; L-isoleucine from 2-oxobutanoate: step 3/4.</text>
</comment>
<comment type="pathway">
    <text evidence="1">Amino-acid biosynthesis; L-valine biosynthesis; L-valine from pyruvate: step 3/4.</text>
</comment>
<comment type="subunit">
    <text evidence="1">Homodimer.</text>
</comment>
<comment type="similarity">
    <text evidence="1">Belongs to the IlvD/Edd family.</text>
</comment>
<name>ILVD_ECO5E</name>
<proteinExistence type="inferred from homology"/>
<gene>
    <name evidence="1" type="primary">ilvD</name>
    <name type="ordered locus">ECH74115_5205</name>
</gene>
<dbReference type="EC" id="4.2.1.9" evidence="1"/>
<dbReference type="EMBL" id="CP001164">
    <property type="protein sequence ID" value="ACI36421.1"/>
    <property type="molecule type" value="Genomic_DNA"/>
</dbReference>
<dbReference type="RefSeq" id="WP_001127409.1">
    <property type="nucleotide sequence ID" value="NC_011353.1"/>
</dbReference>
<dbReference type="SMR" id="B5YY20"/>
<dbReference type="KEGG" id="ecf:ECH74115_5205"/>
<dbReference type="HOGENOM" id="CLU_014271_4_2_6"/>
<dbReference type="UniPathway" id="UPA00047">
    <property type="reaction ID" value="UER00057"/>
</dbReference>
<dbReference type="UniPathway" id="UPA00049">
    <property type="reaction ID" value="UER00061"/>
</dbReference>
<dbReference type="GO" id="GO:0005829">
    <property type="term" value="C:cytosol"/>
    <property type="evidence" value="ECO:0007669"/>
    <property type="project" value="TreeGrafter"/>
</dbReference>
<dbReference type="GO" id="GO:0051537">
    <property type="term" value="F:2 iron, 2 sulfur cluster binding"/>
    <property type="evidence" value="ECO:0007669"/>
    <property type="project" value="UniProtKB-UniRule"/>
</dbReference>
<dbReference type="GO" id="GO:0004160">
    <property type="term" value="F:dihydroxy-acid dehydratase activity"/>
    <property type="evidence" value="ECO:0007669"/>
    <property type="project" value="UniProtKB-UniRule"/>
</dbReference>
<dbReference type="GO" id="GO:0000287">
    <property type="term" value="F:magnesium ion binding"/>
    <property type="evidence" value="ECO:0007669"/>
    <property type="project" value="UniProtKB-UniRule"/>
</dbReference>
<dbReference type="GO" id="GO:0009097">
    <property type="term" value="P:isoleucine biosynthetic process"/>
    <property type="evidence" value="ECO:0007669"/>
    <property type="project" value="UniProtKB-UniRule"/>
</dbReference>
<dbReference type="GO" id="GO:0009099">
    <property type="term" value="P:L-valine biosynthetic process"/>
    <property type="evidence" value="ECO:0007669"/>
    <property type="project" value="UniProtKB-UniRule"/>
</dbReference>
<dbReference type="FunFam" id="3.50.30.80:FF:000001">
    <property type="entry name" value="Dihydroxy-acid dehydratase"/>
    <property type="match status" value="1"/>
</dbReference>
<dbReference type="Gene3D" id="3.50.30.80">
    <property type="entry name" value="IlvD/EDD C-terminal domain-like"/>
    <property type="match status" value="1"/>
</dbReference>
<dbReference type="HAMAP" id="MF_00012">
    <property type="entry name" value="IlvD"/>
    <property type="match status" value="1"/>
</dbReference>
<dbReference type="InterPro" id="IPR042096">
    <property type="entry name" value="Dihydro-acid_dehy_C"/>
</dbReference>
<dbReference type="InterPro" id="IPR004404">
    <property type="entry name" value="DihydroxyA_deHydtase"/>
</dbReference>
<dbReference type="InterPro" id="IPR020558">
    <property type="entry name" value="DiOHA_6PGluconate_deHydtase_CS"/>
</dbReference>
<dbReference type="InterPro" id="IPR056740">
    <property type="entry name" value="ILV_EDD_C"/>
</dbReference>
<dbReference type="InterPro" id="IPR000581">
    <property type="entry name" value="ILV_EDD_N"/>
</dbReference>
<dbReference type="InterPro" id="IPR037237">
    <property type="entry name" value="IlvD/EDD_N"/>
</dbReference>
<dbReference type="NCBIfam" id="TIGR00110">
    <property type="entry name" value="ilvD"/>
    <property type="match status" value="1"/>
</dbReference>
<dbReference type="NCBIfam" id="NF009103">
    <property type="entry name" value="PRK12448.1"/>
    <property type="match status" value="1"/>
</dbReference>
<dbReference type="PANTHER" id="PTHR43661">
    <property type="entry name" value="D-XYLONATE DEHYDRATASE"/>
    <property type="match status" value="1"/>
</dbReference>
<dbReference type="PANTHER" id="PTHR43661:SF3">
    <property type="entry name" value="D-XYLONATE DEHYDRATASE YAGF-RELATED"/>
    <property type="match status" value="1"/>
</dbReference>
<dbReference type="Pfam" id="PF24877">
    <property type="entry name" value="ILV_EDD_C"/>
    <property type="match status" value="1"/>
</dbReference>
<dbReference type="Pfam" id="PF00920">
    <property type="entry name" value="ILVD_EDD_N"/>
    <property type="match status" value="1"/>
</dbReference>
<dbReference type="SUPFAM" id="SSF143975">
    <property type="entry name" value="IlvD/EDD N-terminal domain-like"/>
    <property type="match status" value="1"/>
</dbReference>
<dbReference type="SUPFAM" id="SSF52016">
    <property type="entry name" value="LeuD/IlvD-like"/>
    <property type="match status" value="1"/>
</dbReference>
<dbReference type="PROSITE" id="PS00886">
    <property type="entry name" value="ILVD_EDD_1"/>
    <property type="match status" value="1"/>
</dbReference>
<dbReference type="PROSITE" id="PS00887">
    <property type="entry name" value="ILVD_EDD_2"/>
    <property type="match status" value="1"/>
</dbReference>
<evidence type="ECO:0000255" key="1">
    <source>
        <dbReference type="HAMAP-Rule" id="MF_00012"/>
    </source>
</evidence>
<sequence length="616" mass="65576">MPKYRSATTTHGRNMAGARALWRATGMTDADFGKPIIAVVNSFTQFVPGHVHLRDLGKLVAEQIEAAGGVAKEFNTIAVDDGIAMGHGGMLYSLPSRELIADSVEYMVNAHCADAMVCISNCDKITPGMLMASLRLNIPVIFVSGGPMEAGKTKLSDQIIKLDLVDAMIQGADPKVSDSQSDQVERSACPTCGSCSGMFTANSMNCLTEALGLSQPGNGSLLATHSDRKQLFLNAGKRIVELTKRYYEQNDESALPRNIASKAAFENAMTLDIAMGGSTNTVLHLLAAAQEAEIDFTMSDIDKLSRKVPQLCKVAPSTQKYHMEDVHRAGGVIGILGELDRAGLLNRDVKNVLGLTLPQTLEQYDVMLTQDDAVKNMFRAGPAGIRTTQAFSQDCRWDTLDDDRANGCIRSLEHAYSKDGGLAVLYGNFAENGCIVKTAGVDDSILKFTGPAKVYESQDDAVEAILGGKVVAGDVVVIRYEGPKGGPGMQEMLYPTSFLKSMGLGKACALITDGRFSGGTSGLSIGHVSPEAASGGSIGLIEDGDLIAIDIPNRGIQLQVSDAELAARREAQEARGDKAWTPKNRERQISFALRAYASLATSADKGAVRDKSKLGG</sequence>
<accession>B5YY20</accession>